<organism>
    <name type="scientific">Escherichia coli (strain SE11)</name>
    <dbReference type="NCBI Taxonomy" id="409438"/>
    <lineage>
        <taxon>Bacteria</taxon>
        <taxon>Pseudomonadati</taxon>
        <taxon>Pseudomonadota</taxon>
        <taxon>Gammaproteobacteria</taxon>
        <taxon>Enterobacterales</taxon>
        <taxon>Enterobacteriaceae</taxon>
        <taxon>Escherichia</taxon>
    </lineage>
</organism>
<protein>
    <recommendedName>
        <fullName evidence="1">Phosphoenolpyruvate carboxykinase (ATP)</fullName>
        <shortName evidence="1">PCK</shortName>
        <shortName evidence="1">PEP carboxykinase</shortName>
        <shortName evidence="1">PEPCK</shortName>
        <ecNumber evidence="1">4.1.1.49</ecNumber>
    </recommendedName>
</protein>
<accession>B6I2W3</accession>
<proteinExistence type="inferred from homology"/>
<name>PCKA_ECOSE</name>
<sequence>MRVNNGLTPQELEAYGISDVHDIVYNPSYDLLYQEELDPSLTGYERGVLTNLGAVAVDTGIFTGRSPKDKYIVRDDTTRDTFWWADKGKGKNDNKPLSPETWQHLKGLVTKQLSGKRLFVVDAFCGANPDTRLSVRFITEVAWQAHFVKNMFIRPSDEELAGFKPDFIVMNGAKCTNPQWKEQGLNSENFVAFNLTERMQLIGGTWYGGEMKKGMFSMMNYLLPLKGIASMHCSANVGEKGDVAVFFGLSGTGKTTLSTDPKRRLIGDDEHGWDDDGVFNFEGGCYAKTIKLSKEAEPEIYNAIRRDALLENVTVREDGTIDFDDGSKTENTRVSYPIYHIDNIVKPVSKAGHATKVIFLTADAFGVLPPVSRLTADQTQYHFLSGFTAKLAGTERGITEPTPTFSACFGAAFLSLHPTQYAEVLVKRMQAAGAQAYLVNTGWNGTGKRISIKDTRAIIDAILNGSLDNAETFTLPMFNLAIPTELPGVDTKILDPRNTYASPEQWQEKAETLAKLFIDNFDKYTDTPAGAALVAAGPKL</sequence>
<evidence type="ECO:0000255" key="1">
    <source>
        <dbReference type="HAMAP-Rule" id="MF_00453"/>
    </source>
</evidence>
<comment type="function">
    <text evidence="1">Involved in the gluconeogenesis. Catalyzes the conversion of oxaloacetate (OAA) to phosphoenolpyruvate (PEP) through direct phosphoryl transfer between the nucleoside triphosphate and OAA.</text>
</comment>
<comment type="catalytic activity">
    <reaction evidence="1">
        <text>oxaloacetate + ATP = phosphoenolpyruvate + ADP + CO2</text>
        <dbReference type="Rhea" id="RHEA:18617"/>
        <dbReference type="ChEBI" id="CHEBI:16452"/>
        <dbReference type="ChEBI" id="CHEBI:16526"/>
        <dbReference type="ChEBI" id="CHEBI:30616"/>
        <dbReference type="ChEBI" id="CHEBI:58702"/>
        <dbReference type="ChEBI" id="CHEBI:456216"/>
        <dbReference type="EC" id="4.1.1.49"/>
    </reaction>
</comment>
<comment type="cofactor">
    <cofactor evidence="1">
        <name>Mn(2+)</name>
        <dbReference type="ChEBI" id="CHEBI:29035"/>
    </cofactor>
    <text evidence="1">Binds 1 Mn(2+) ion per subunit.</text>
</comment>
<comment type="pathway">
    <text evidence="1">Carbohydrate biosynthesis; gluconeogenesis.</text>
</comment>
<comment type="subunit">
    <text evidence="1">Monomer.</text>
</comment>
<comment type="subcellular location">
    <subcellularLocation>
        <location evidence="1">Cytoplasm</location>
    </subcellularLocation>
</comment>
<comment type="similarity">
    <text evidence="1">Belongs to the phosphoenolpyruvate carboxykinase (ATP) family.</text>
</comment>
<feature type="chain" id="PRO_1000125066" description="Phosphoenolpyruvate carboxykinase (ATP)">
    <location>
        <begin position="1"/>
        <end position="540"/>
    </location>
</feature>
<feature type="binding site" evidence="1">
    <location>
        <position position="65"/>
    </location>
    <ligand>
        <name>substrate</name>
    </ligand>
</feature>
<feature type="binding site" evidence="1">
    <location>
        <position position="207"/>
    </location>
    <ligand>
        <name>substrate</name>
    </ligand>
</feature>
<feature type="binding site" evidence="1">
    <location>
        <position position="213"/>
    </location>
    <ligand>
        <name>ATP</name>
        <dbReference type="ChEBI" id="CHEBI:30616"/>
    </ligand>
</feature>
<feature type="binding site" evidence="1">
    <location>
        <position position="213"/>
    </location>
    <ligand>
        <name>Mn(2+)</name>
        <dbReference type="ChEBI" id="CHEBI:29035"/>
    </ligand>
</feature>
<feature type="binding site" evidence="1">
    <location>
        <position position="213"/>
    </location>
    <ligand>
        <name>substrate</name>
    </ligand>
</feature>
<feature type="binding site" evidence="1">
    <location>
        <position position="232"/>
    </location>
    <ligand>
        <name>ATP</name>
        <dbReference type="ChEBI" id="CHEBI:30616"/>
    </ligand>
</feature>
<feature type="binding site" evidence="1">
    <location>
        <position position="232"/>
    </location>
    <ligand>
        <name>Mn(2+)</name>
        <dbReference type="ChEBI" id="CHEBI:29035"/>
    </ligand>
</feature>
<feature type="binding site" evidence="1">
    <location>
        <begin position="248"/>
        <end position="256"/>
    </location>
    <ligand>
        <name>ATP</name>
        <dbReference type="ChEBI" id="CHEBI:30616"/>
    </ligand>
</feature>
<feature type="binding site" evidence="1">
    <location>
        <position position="269"/>
    </location>
    <ligand>
        <name>Mn(2+)</name>
        <dbReference type="ChEBI" id="CHEBI:29035"/>
    </ligand>
</feature>
<feature type="binding site" evidence="1">
    <location>
        <position position="297"/>
    </location>
    <ligand>
        <name>ATP</name>
        <dbReference type="ChEBI" id="CHEBI:30616"/>
    </ligand>
</feature>
<feature type="binding site" evidence="1">
    <location>
        <position position="333"/>
    </location>
    <ligand>
        <name>ATP</name>
        <dbReference type="ChEBI" id="CHEBI:30616"/>
    </ligand>
</feature>
<feature type="binding site" evidence="1">
    <location>
        <position position="333"/>
    </location>
    <ligand>
        <name>substrate</name>
    </ligand>
</feature>
<feature type="binding site" evidence="1">
    <location>
        <begin position="449"/>
        <end position="450"/>
    </location>
    <ligand>
        <name>ATP</name>
        <dbReference type="ChEBI" id="CHEBI:30616"/>
    </ligand>
</feature>
<feature type="binding site" evidence="1">
    <location>
        <position position="455"/>
    </location>
    <ligand>
        <name>ATP</name>
        <dbReference type="ChEBI" id="CHEBI:30616"/>
    </ligand>
</feature>
<feature type="modified residue" description="N6-acetyllysine" evidence="1">
    <location>
        <position position="87"/>
    </location>
</feature>
<feature type="modified residue" description="N6-acetyllysine" evidence="1">
    <location>
        <position position="523"/>
    </location>
</feature>
<keyword id="KW-0007">Acetylation</keyword>
<keyword id="KW-0067">ATP-binding</keyword>
<keyword id="KW-0963">Cytoplasm</keyword>
<keyword id="KW-0210">Decarboxylase</keyword>
<keyword id="KW-0312">Gluconeogenesis</keyword>
<keyword id="KW-0456">Lyase</keyword>
<keyword id="KW-0464">Manganese</keyword>
<keyword id="KW-0479">Metal-binding</keyword>
<keyword id="KW-0547">Nucleotide-binding</keyword>
<dbReference type="EC" id="4.1.1.49" evidence="1"/>
<dbReference type="EMBL" id="AP009240">
    <property type="protein sequence ID" value="BAG79190.1"/>
    <property type="molecule type" value="Genomic_DNA"/>
</dbReference>
<dbReference type="RefSeq" id="WP_001298201.1">
    <property type="nucleotide sequence ID" value="NC_011415.1"/>
</dbReference>
<dbReference type="SMR" id="B6I2W3"/>
<dbReference type="GeneID" id="75173560"/>
<dbReference type="KEGG" id="ecy:ECSE_3666"/>
<dbReference type="HOGENOM" id="CLU_018247_0_1_6"/>
<dbReference type="UniPathway" id="UPA00138"/>
<dbReference type="Proteomes" id="UP000008199">
    <property type="component" value="Chromosome"/>
</dbReference>
<dbReference type="GO" id="GO:0005829">
    <property type="term" value="C:cytosol"/>
    <property type="evidence" value="ECO:0007669"/>
    <property type="project" value="TreeGrafter"/>
</dbReference>
<dbReference type="GO" id="GO:0005524">
    <property type="term" value="F:ATP binding"/>
    <property type="evidence" value="ECO:0007669"/>
    <property type="project" value="UniProtKB-UniRule"/>
</dbReference>
<dbReference type="GO" id="GO:0046872">
    <property type="term" value="F:metal ion binding"/>
    <property type="evidence" value="ECO:0007669"/>
    <property type="project" value="UniProtKB-KW"/>
</dbReference>
<dbReference type="GO" id="GO:0004612">
    <property type="term" value="F:phosphoenolpyruvate carboxykinase (ATP) activity"/>
    <property type="evidence" value="ECO:0007669"/>
    <property type="project" value="UniProtKB-UniRule"/>
</dbReference>
<dbReference type="GO" id="GO:0006094">
    <property type="term" value="P:gluconeogenesis"/>
    <property type="evidence" value="ECO:0007669"/>
    <property type="project" value="UniProtKB-UniRule"/>
</dbReference>
<dbReference type="CDD" id="cd00484">
    <property type="entry name" value="PEPCK_ATP"/>
    <property type="match status" value="1"/>
</dbReference>
<dbReference type="FunFam" id="2.170.8.10:FF:000001">
    <property type="entry name" value="Phosphoenolpyruvate carboxykinase (ATP)"/>
    <property type="match status" value="1"/>
</dbReference>
<dbReference type="FunFam" id="3.40.449.10:FF:000001">
    <property type="entry name" value="Phosphoenolpyruvate carboxykinase (ATP)"/>
    <property type="match status" value="1"/>
</dbReference>
<dbReference type="Gene3D" id="3.90.228.20">
    <property type="match status" value="1"/>
</dbReference>
<dbReference type="Gene3D" id="3.40.449.10">
    <property type="entry name" value="Phosphoenolpyruvate Carboxykinase, domain 1"/>
    <property type="match status" value="1"/>
</dbReference>
<dbReference type="Gene3D" id="2.170.8.10">
    <property type="entry name" value="Phosphoenolpyruvate Carboxykinase, domain 2"/>
    <property type="match status" value="1"/>
</dbReference>
<dbReference type="HAMAP" id="MF_00453">
    <property type="entry name" value="PEPCK_ATP"/>
    <property type="match status" value="1"/>
</dbReference>
<dbReference type="InterPro" id="IPR001272">
    <property type="entry name" value="PEP_carboxykinase_ATP"/>
</dbReference>
<dbReference type="InterPro" id="IPR013035">
    <property type="entry name" value="PEP_carboxykinase_C"/>
</dbReference>
<dbReference type="InterPro" id="IPR008210">
    <property type="entry name" value="PEP_carboxykinase_N"/>
</dbReference>
<dbReference type="InterPro" id="IPR015994">
    <property type="entry name" value="PEPCK_ATP_CS"/>
</dbReference>
<dbReference type="NCBIfam" id="TIGR00224">
    <property type="entry name" value="pckA"/>
    <property type="match status" value="1"/>
</dbReference>
<dbReference type="NCBIfam" id="NF006819">
    <property type="entry name" value="PRK09344.1-1"/>
    <property type="match status" value="1"/>
</dbReference>
<dbReference type="NCBIfam" id="NF006820">
    <property type="entry name" value="PRK09344.1-2"/>
    <property type="match status" value="1"/>
</dbReference>
<dbReference type="NCBIfam" id="NF006821">
    <property type="entry name" value="PRK09344.1-3"/>
    <property type="match status" value="1"/>
</dbReference>
<dbReference type="PANTHER" id="PTHR30031:SF0">
    <property type="entry name" value="PHOSPHOENOLPYRUVATE CARBOXYKINASE (ATP)"/>
    <property type="match status" value="1"/>
</dbReference>
<dbReference type="PANTHER" id="PTHR30031">
    <property type="entry name" value="PHOSPHOENOLPYRUVATE CARBOXYKINASE ATP"/>
    <property type="match status" value="1"/>
</dbReference>
<dbReference type="Pfam" id="PF01293">
    <property type="entry name" value="PEPCK_ATP"/>
    <property type="match status" value="1"/>
</dbReference>
<dbReference type="PIRSF" id="PIRSF006294">
    <property type="entry name" value="PEP_crbxkin"/>
    <property type="match status" value="1"/>
</dbReference>
<dbReference type="SUPFAM" id="SSF68923">
    <property type="entry name" value="PEP carboxykinase N-terminal domain"/>
    <property type="match status" value="1"/>
</dbReference>
<dbReference type="SUPFAM" id="SSF53795">
    <property type="entry name" value="PEP carboxykinase-like"/>
    <property type="match status" value="1"/>
</dbReference>
<dbReference type="PROSITE" id="PS00532">
    <property type="entry name" value="PEPCK_ATP"/>
    <property type="match status" value="1"/>
</dbReference>
<gene>
    <name evidence="1" type="primary">pckA</name>
    <name type="ordered locus">ECSE_3666</name>
</gene>
<reference key="1">
    <citation type="journal article" date="2008" name="DNA Res.">
        <title>Complete genome sequence and comparative analysis of the wild-type commensal Escherichia coli strain SE11 isolated from a healthy adult.</title>
        <authorList>
            <person name="Oshima K."/>
            <person name="Toh H."/>
            <person name="Ogura Y."/>
            <person name="Sasamoto H."/>
            <person name="Morita H."/>
            <person name="Park S.-H."/>
            <person name="Ooka T."/>
            <person name="Iyoda S."/>
            <person name="Taylor T.D."/>
            <person name="Hayashi T."/>
            <person name="Itoh K."/>
            <person name="Hattori M."/>
        </authorList>
    </citation>
    <scope>NUCLEOTIDE SEQUENCE [LARGE SCALE GENOMIC DNA]</scope>
    <source>
        <strain>SE11</strain>
    </source>
</reference>